<organism evidence="6">
    <name type="scientific">Drosophila mauritiana</name>
    <name type="common">Fruit fly</name>
    <dbReference type="NCBI Taxonomy" id="7226"/>
    <lineage>
        <taxon>Eukaryota</taxon>
        <taxon>Metazoa</taxon>
        <taxon>Ecdysozoa</taxon>
        <taxon>Arthropoda</taxon>
        <taxon>Hexapoda</taxon>
        <taxon>Insecta</taxon>
        <taxon>Pterygota</taxon>
        <taxon>Neoptera</taxon>
        <taxon>Endopterygota</taxon>
        <taxon>Diptera</taxon>
        <taxon>Brachycera</taxon>
        <taxon>Muscomorpha</taxon>
        <taxon>Ephydroidea</taxon>
        <taxon>Drosophilidae</taxon>
        <taxon>Drosophila</taxon>
        <taxon>Sophophora</taxon>
    </lineage>
</organism>
<gene>
    <name type="primary">janA</name>
</gene>
<name>JANA_DROMA</name>
<sequence>MNRLQLLSKGLRLIHKMSEEALAGVPLVHISPEGIFKYVMINVIDGGDASKAVIRGFADCTWHADIFEREEDVFKKLGLRAECPGGGRIEHNPDKKYLKVYGYSQGFGKADHAQTKRILATKYPDYTIEISDEGY</sequence>
<protein>
    <recommendedName>
        <fullName>Sex-regulated protein janus-A</fullName>
    </recommendedName>
</protein>
<evidence type="ECO:0000250" key="1"/>
<evidence type="ECO:0000305" key="2"/>
<evidence type="ECO:0000312" key="3">
    <source>
        <dbReference type="EMBL" id="AAG49472.1"/>
    </source>
</evidence>
<evidence type="ECO:0000312" key="4">
    <source>
        <dbReference type="EMBL" id="AAG49474.1"/>
    </source>
</evidence>
<evidence type="ECO:0000312" key="5">
    <source>
        <dbReference type="EMBL" id="AAG49476.1"/>
    </source>
</evidence>
<evidence type="ECO:0000312" key="6">
    <source>
        <dbReference type="EMBL" id="AAG50361.1"/>
    </source>
</evidence>
<accession>Q9BM98</accession>
<accession>Q9BH67</accession>
<accession>Q9BMZ5</accession>
<keyword id="KW-0221">Differentiation</keyword>
<keyword id="KW-0726">Sexual differentiation</keyword>
<reference evidence="2" key="1">
    <citation type="journal article" date="2001" name="Mol. Biol. Evol.">
        <title>Molecular evolution of the ocnus and janus genes in the Drosophila melanogaster species subgroup.</title>
        <authorList>
            <person name="Parsch J."/>
            <person name="Meiklejohn C.D."/>
            <person name="Hauschteck-Jungen E."/>
            <person name="Hunziker P."/>
            <person name="Hartl D.L."/>
        </authorList>
    </citation>
    <scope>NUCLEOTIDE SEQUENCE [GENOMIC DNA]</scope>
</reference>
<reference evidence="2" key="2">
    <citation type="journal article" date="2000" name="Genetics">
        <title>The population genetics of the origin and divergence of the Drosophila simulans complex species.</title>
        <authorList>
            <person name="Kliman R.M."/>
            <person name="Andolfatto P."/>
            <person name="Coyne J.A."/>
            <person name="Depaulis F."/>
            <person name="Kreitman M."/>
            <person name="Berry A.J."/>
            <person name="McCarter J."/>
            <person name="Wakeley J."/>
            <person name="Hey J."/>
        </authorList>
    </citation>
    <scope>NUCLEOTIDE SEQUENCE [GENOMIC DNA] OF 32-135</scope>
    <source>
        <strain evidence="3">1631</strain>
        <strain evidence="4">Cap Malheureux</strain>
        <strain evidence="5">Port-Louis</strain>
    </source>
</reference>
<dbReference type="EMBL" id="AY013340">
    <property type="protein sequence ID" value="AAG50361.1"/>
    <property type="molecule type" value="Genomic_DNA"/>
</dbReference>
<dbReference type="EMBL" id="AF284456">
    <property type="protein sequence ID" value="AAG49472.1"/>
    <property type="molecule type" value="Genomic_DNA"/>
</dbReference>
<dbReference type="EMBL" id="AF284457">
    <property type="protein sequence ID" value="AAG49474.1"/>
    <property type="molecule type" value="Genomic_DNA"/>
</dbReference>
<dbReference type="EMBL" id="AF284458">
    <property type="protein sequence ID" value="AAG49476.1"/>
    <property type="molecule type" value="Genomic_DNA"/>
</dbReference>
<dbReference type="SMR" id="Q9BM98"/>
<dbReference type="Proteomes" id="UP000515162">
    <property type="component" value="Unplaced"/>
</dbReference>
<dbReference type="GO" id="GO:0005829">
    <property type="term" value="C:cytosol"/>
    <property type="evidence" value="ECO:0007669"/>
    <property type="project" value="TreeGrafter"/>
</dbReference>
<dbReference type="GO" id="GO:0101006">
    <property type="term" value="F:protein histidine phosphatase activity"/>
    <property type="evidence" value="ECO:0007669"/>
    <property type="project" value="TreeGrafter"/>
</dbReference>
<dbReference type="GO" id="GO:0030154">
    <property type="term" value="P:cell differentiation"/>
    <property type="evidence" value="ECO:0007669"/>
    <property type="project" value="UniProtKB-KW"/>
</dbReference>
<dbReference type="GO" id="GO:0007548">
    <property type="term" value="P:sex differentiation"/>
    <property type="evidence" value="ECO:0000250"/>
    <property type="project" value="UniProtKB"/>
</dbReference>
<dbReference type="FunFam" id="3.50.20.20:FF:000001">
    <property type="entry name" value="14 kDa phosphohistidine phosphatase"/>
    <property type="match status" value="1"/>
</dbReference>
<dbReference type="Gene3D" id="3.50.20.20">
    <property type="entry name" value="Janus/Ocnus"/>
    <property type="match status" value="1"/>
</dbReference>
<dbReference type="InterPro" id="IPR007702">
    <property type="entry name" value="Janus"/>
</dbReference>
<dbReference type="InterPro" id="IPR038596">
    <property type="entry name" value="Janus_sf"/>
</dbReference>
<dbReference type="PANTHER" id="PTHR12258:SF5">
    <property type="entry name" value="BCDNA.GH02250-RELATED"/>
    <property type="match status" value="1"/>
</dbReference>
<dbReference type="PANTHER" id="PTHR12258">
    <property type="entry name" value="JANUS-A/JANUS-B"/>
    <property type="match status" value="1"/>
</dbReference>
<dbReference type="Pfam" id="PF05005">
    <property type="entry name" value="Ocnus"/>
    <property type="match status" value="1"/>
</dbReference>
<dbReference type="SUPFAM" id="SSF143724">
    <property type="entry name" value="PHP14-like"/>
    <property type="match status" value="1"/>
</dbReference>
<proteinExistence type="inferred from homology"/>
<feature type="chain" id="PRO_0000206157" description="Sex-regulated protein janus-A">
    <location>
        <begin position="1"/>
        <end position="135"/>
    </location>
</feature>
<feature type="active site" description="Proton acceptor" evidence="1">
    <location>
        <position position="63"/>
    </location>
</feature>
<feature type="binding site" evidence="1">
    <location>
        <position position="37"/>
    </location>
    <ligand>
        <name>substrate</name>
    </ligand>
</feature>
<feature type="binding site" evidence="1">
    <location>
        <begin position="104"/>
        <end position="106"/>
    </location>
    <ligand>
        <name>substrate</name>
    </ligand>
</feature>
<feature type="sequence conflict" description="In Ref. 2; AAG49472/AAG49474/AAG49476." evidence="2" ref="2">
    <original>G</original>
    <variation>R</variation>
    <location>
        <position position="56"/>
    </location>
</feature>
<feature type="sequence conflict" description="In Ref. 2; AAG49472/AAG49474/AAG49476." evidence="2" ref="2">
    <original>D</original>
    <variation>E</variation>
    <location>
        <position position="72"/>
    </location>
</feature>
<comment type="function">
    <text evidence="1">JanA and janB regulate somatic sex differentiation.</text>
</comment>
<comment type="similarity">
    <text evidence="2">Belongs to the janus family.</text>
</comment>